<keyword id="KW-0963">Cytoplasm</keyword>
<keyword id="KW-0312">Gluconeogenesis</keyword>
<keyword id="KW-0324">Glycolysis</keyword>
<keyword id="KW-0413">Isomerase</keyword>
<organism>
    <name type="scientific">Coxiella burnetii (strain CbuG_Q212)</name>
    <name type="common">Coxiella burnetii (strain Q212)</name>
    <dbReference type="NCBI Taxonomy" id="434923"/>
    <lineage>
        <taxon>Bacteria</taxon>
        <taxon>Pseudomonadati</taxon>
        <taxon>Pseudomonadota</taxon>
        <taxon>Gammaproteobacteria</taxon>
        <taxon>Legionellales</taxon>
        <taxon>Coxiellaceae</taxon>
        <taxon>Coxiella</taxon>
    </lineage>
</organism>
<gene>
    <name evidence="1" type="primary">pgi</name>
    <name type="ordered locus">CbuG_1153</name>
</gene>
<reference key="1">
    <citation type="journal article" date="2009" name="Infect. Immun.">
        <title>Comparative genomics reveal extensive transposon-mediated genomic plasticity and diversity among potential effector proteins within the genus Coxiella.</title>
        <authorList>
            <person name="Beare P.A."/>
            <person name="Unsworth N."/>
            <person name="Andoh M."/>
            <person name="Voth D.E."/>
            <person name="Omsland A."/>
            <person name="Gilk S.D."/>
            <person name="Williams K.P."/>
            <person name="Sobral B.W."/>
            <person name="Kupko J.J. III"/>
            <person name="Porcella S.F."/>
            <person name="Samuel J.E."/>
            <person name="Heinzen R.A."/>
        </authorList>
    </citation>
    <scope>NUCLEOTIDE SEQUENCE [LARGE SCALE GENOMIC DNA]</scope>
    <source>
        <strain>CbuG_Q212</strain>
    </source>
</reference>
<protein>
    <recommendedName>
        <fullName evidence="1">Glucose-6-phosphate isomerase</fullName>
        <shortName evidence="1">GPI</shortName>
        <ecNumber evidence="1">5.3.1.9</ecNumber>
    </recommendedName>
    <alternativeName>
        <fullName evidence="1">Phosphoglucose isomerase</fullName>
        <shortName evidence="1">PGI</shortName>
    </alternativeName>
    <alternativeName>
        <fullName evidence="1">Phosphohexose isomerase</fullName>
        <shortName evidence="1">PHI</shortName>
    </alternativeName>
</protein>
<evidence type="ECO:0000255" key="1">
    <source>
        <dbReference type="HAMAP-Rule" id="MF_00473"/>
    </source>
</evidence>
<comment type="function">
    <text evidence="1">Catalyzes the reversible isomerization of glucose-6-phosphate to fructose-6-phosphate.</text>
</comment>
<comment type="catalytic activity">
    <reaction evidence="1">
        <text>alpha-D-glucose 6-phosphate = beta-D-fructose 6-phosphate</text>
        <dbReference type="Rhea" id="RHEA:11816"/>
        <dbReference type="ChEBI" id="CHEBI:57634"/>
        <dbReference type="ChEBI" id="CHEBI:58225"/>
        <dbReference type="EC" id="5.3.1.9"/>
    </reaction>
</comment>
<comment type="pathway">
    <text evidence="1">Carbohydrate biosynthesis; gluconeogenesis.</text>
</comment>
<comment type="pathway">
    <text evidence="1">Carbohydrate degradation; glycolysis; D-glyceraldehyde 3-phosphate and glycerone phosphate from D-glucose: step 2/4.</text>
</comment>
<comment type="subcellular location">
    <subcellularLocation>
        <location evidence="1">Cytoplasm</location>
    </subcellularLocation>
</comment>
<comment type="similarity">
    <text evidence="1">Belongs to the GPI family.</text>
</comment>
<feature type="chain" id="PRO_1000125712" description="Glucose-6-phosphate isomerase">
    <location>
        <begin position="1"/>
        <end position="547"/>
    </location>
</feature>
<feature type="active site" description="Proton donor" evidence="1">
    <location>
        <position position="351"/>
    </location>
</feature>
<feature type="active site" evidence="1">
    <location>
        <position position="382"/>
    </location>
</feature>
<feature type="active site" evidence="1">
    <location>
        <position position="509"/>
    </location>
</feature>
<proteinExistence type="inferred from homology"/>
<dbReference type="EC" id="5.3.1.9" evidence="1"/>
<dbReference type="EMBL" id="CP001019">
    <property type="protein sequence ID" value="ACJ18487.1"/>
    <property type="molecule type" value="Genomic_DNA"/>
</dbReference>
<dbReference type="RefSeq" id="WP_012570118.1">
    <property type="nucleotide sequence ID" value="NC_011527.1"/>
</dbReference>
<dbReference type="SMR" id="B6J0K9"/>
<dbReference type="KEGG" id="cbg:CbuG_1153"/>
<dbReference type="HOGENOM" id="CLU_017947_3_1_6"/>
<dbReference type="UniPathway" id="UPA00109">
    <property type="reaction ID" value="UER00181"/>
</dbReference>
<dbReference type="UniPathway" id="UPA00138"/>
<dbReference type="GO" id="GO:0005829">
    <property type="term" value="C:cytosol"/>
    <property type="evidence" value="ECO:0007669"/>
    <property type="project" value="TreeGrafter"/>
</dbReference>
<dbReference type="GO" id="GO:0097367">
    <property type="term" value="F:carbohydrate derivative binding"/>
    <property type="evidence" value="ECO:0007669"/>
    <property type="project" value="InterPro"/>
</dbReference>
<dbReference type="GO" id="GO:0004347">
    <property type="term" value="F:glucose-6-phosphate isomerase activity"/>
    <property type="evidence" value="ECO:0007669"/>
    <property type="project" value="UniProtKB-UniRule"/>
</dbReference>
<dbReference type="GO" id="GO:0048029">
    <property type="term" value="F:monosaccharide binding"/>
    <property type="evidence" value="ECO:0007669"/>
    <property type="project" value="TreeGrafter"/>
</dbReference>
<dbReference type="GO" id="GO:0006094">
    <property type="term" value="P:gluconeogenesis"/>
    <property type="evidence" value="ECO:0007669"/>
    <property type="project" value="UniProtKB-UniRule"/>
</dbReference>
<dbReference type="GO" id="GO:0051156">
    <property type="term" value="P:glucose 6-phosphate metabolic process"/>
    <property type="evidence" value="ECO:0007669"/>
    <property type="project" value="TreeGrafter"/>
</dbReference>
<dbReference type="GO" id="GO:0006096">
    <property type="term" value="P:glycolytic process"/>
    <property type="evidence" value="ECO:0007669"/>
    <property type="project" value="UniProtKB-UniRule"/>
</dbReference>
<dbReference type="CDD" id="cd05015">
    <property type="entry name" value="SIS_PGI_1"/>
    <property type="match status" value="1"/>
</dbReference>
<dbReference type="CDD" id="cd05016">
    <property type="entry name" value="SIS_PGI_2"/>
    <property type="match status" value="1"/>
</dbReference>
<dbReference type="Gene3D" id="1.10.1390.10">
    <property type="match status" value="1"/>
</dbReference>
<dbReference type="Gene3D" id="3.40.50.10490">
    <property type="entry name" value="Glucose-6-phosphate isomerase like protein, domain 1"/>
    <property type="match status" value="2"/>
</dbReference>
<dbReference type="HAMAP" id="MF_00473">
    <property type="entry name" value="G6P_isomerase"/>
    <property type="match status" value="1"/>
</dbReference>
<dbReference type="InterPro" id="IPR001672">
    <property type="entry name" value="G6P_Isomerase"/>
</dbReference>
<dbReference type="InterPro" id="IPR023096">
    <property type="entry name" value="G6P_Isomerase_C"/>
</dbReference>
<dbReference type="InterPro" id="IPR018189">
    <property type="entry name" value="Phosphoglucose_isomerase_CS"/>
</dbReference>
<dbReference type="InterPro" id="IPR046348">
    <property type="entry name" value="SIS_dom_sf"/>
</dbReference>
<dbReference type="InterPro" id="IPR035476">
    <property type="entry name" value="SIS_PGI_1"/>
</dbReference>
<dbReference type="InterPro" id="IPR035482">
    <property type="entry name" value="SIS_PGI_2"/>
</dbReference>
<dbReference type="NCBIfam" id="NF001211">
    <property type="entry name" value="PRK00179.1"/>
    <property type="match status" value="1"/>
</dbReference>
<dbReference type="PANTHER" id="PTHR11469">
    <property type="entry name" value="GLUCOSE-6-PHOSPHATE ISOMERASE"/>
    <property type="match status" value="1"/>
</dbReference>
<dbReference type="PANTHER" id="PTHR11469:SF1">
    <property type="entry name" value="GLUCOSE-6-PHOSPHATE ISOMERASE"/>
    <property type="match status" value="1"/>
</dbReference>
<dbReference type="Pfam" id="PF00342">
    <property type="entry name" value="PGI"/>
    <property type="match status" value="1"/>
</dbReference>
<dbReference type="PRINTS" id="PR00662">
    <property type="entry name" value="G6PISOMERASE"/>
</dbReference>
<dbReference type="SUPFAM" id="SSF53697">
    <property type="entry name" value="SIS domain"/>
    <property type="match status" value="1"/>
</dbReference>
<dbReference type="PROSITE" id="PS00174">
    <property type="entry name" value="P_GLUCOSE_ISOMERASE_2"/>
    <property type="match status" value="1"/>
</dbReference>
<dbReference type="PROSITE" id="PS51463">
    <property type="entry name" value="P_GLUCOSE_ISOMERASE_3"/>
    <property type="match status" value="1"/>
</dbReference>
<name>G6PI_COXB2</name>
<sequence length="547" mass="62375">MSLVESPPWQALKSKYQELSSLHMRDFFAQDKKRGTRLSLEAAGLYFDYSKNRVDEKTIDLLCESANACNLPLRIEQLFSGKLTNESGEMVGFHTALRQVNNFSFKTNNNAIQEIHASWEKIKKLSIRIREGDYKGFTNKSITDIVNIGIGGSSLGPQMAYNALKPYVKAPLRCHFISNLDDTDFYETVRTLNPETTLFIITSKTFTTKETLENARRATEWLMQAAKKENLIQTHFMAVTAAPEKAHEFGIQKDNIFMLWPWVGGRFSVWSAAGLSLAIAIGWEEFFEFLRGAHAMDTHFRQAEFNKNMPILLALLSIWYINFFHAKTQAIIPYSQRLVYLPDYLTQLHMESLGKSVQLDGSAVHWQTGAVVWGDLGTNSQHSFHQLFLQGTMVIPVDFIAFLKNSRESHWQLPLIANCLGQSQTLMEGYDKEGVMRDLINQGIEHEKAEKLATYRLIRGNNPSNTIILEELNPYSLGSLLALYEHKVYVQSVIWNINPFDQWGVERGKHLAKDILQALQAETDQSSFDSSTERLINYVLKIKGNRP</sequence>
<accession>B6J0K9</accession>